<accession>B9DW61</accession>
<comment type="similarity">
    <text evidence="1">Belongs to the UPF0473 family.</text>
</comment>
<gene>
    <name type="ordered locus">SUB1774</name>
</gene>
<sequence>MAHNHDHDHEHEVITLVDEQGNESLFEILLTIDGKEEFGKNYVLLVPAGSEEDEAGEIEIQAYSFTENEDGTEGDLQPIPEDSDAEWDMIEEVFNSFLDEE</sequence>
<evidence type="ECO:0000255" key="1">
    <source>
        <dbReference type="HAMAP-Rule" id="MF_01448"/>
    </source>
</evidence>
<feature type="chain" id="PRO_1000185000" description="UPF0473 protein SUB1774">
    <location>
        <begin position="1"/>
        <end position="101"/>
    </location>
</feature>
<proteinExistence type="inferred from homology"/>
<name>Y1774_STRU0</name>
<dbReference type="EMBL" id="AM946015">
    <property type="protein sequence ID" value="CAR43761.1"/>
    <property type="molecule type" value="Genomic_DNA"/>
</dbReference>
<dbReference type="RefSeq" id="WP_015912065.1">
    <property type="nucleotide sequence ID" value="NC_012004.1"/>
</dbReference>
<dbReference type="STRING" id="218495.SUB1774"/>
<dbReference type="KEGG" id="sub:SUB1774"/>
<dbReference type="eggNOG" id="COG3906">
    <property type="taxonomic scope" value="Bacteria"/>
</dbReference>
<dbReference type="HOGENOM" id="CLU_146610_2_1_9"/>
<dbReference type="OrthoDB" id="2086132at2"/>
<dbReference type="Proteomes" id="UP000000449">
    <property type="component" value="Chromosome"/>
</dbReference>
<dbReference type="HAMAP" id="MF_01448">
    <property type="entry name" value="UPF0473"/>
    <property type="match status" value="1"/>
</dbReference>
<dbReference type="InterPro" id="IPR009711">
    <property type="entry name" value="UPF0473"/>
</dbReference>
<dbReference type="NCBIfam" id="NF010215">
    <property type="entry name" value="PRK13678.1-2"/>
    <property type="match status" value="1"/>
</dbReference>
<dbReference type="NCBIfam" id="NF010217">
    <property type="entry name" value="PRK13678.1-4"/>
    <property type="match status" value="1"/>
</dbReference>
<dbReference type="PANTHER" id="PTHR40066">
    <property type="entry name" value="UPF0473 PROTEIN CBO2561/CLC_2432"/>
    <property type="match status" value="1"/>
</dbReference>
<dbReference type="PANTHER" id="PTHR40066:SF1">
    <property type="entry name" value="UPF0473 PROTEIN CBO2561_CLC_2432"/>
    <property type="match status" value="1"/>
</dbReference>
<dbReference type="Pfam" id="PF06949">
    <property type="entry name" value="DUF1292"/>
    <property type="match status" value="1"/>
</dbReference>
<keyword id="KW-1185">Reference proteome</keyword>
<protein>
    <recommendedName>
        <fullName evidence="1">UPF0473 protein SUB1774</fullName>
    </recommendedName>
</protein>
<organism>
    <name type="scientific">Streptococcus uberis (strain ATCC BAA-854 / 0140J)</name>
    <dbReference type="NCBI Taxonomy" id="218495"/>
    <lineage>
        <taxon>Bacteria</taxon>
        <taxon>Bacillati</taxon>
        <taxon>Bacillota</taxon>
        <taxon>Bacilli</taxon>
        <taxon>Lactobacillales</taxon>
        <taxon>Streptococcaceae</taxon>
        <taxon>Streptococcus</taxon>
    </lineage>
</organism>
<reference key="1">
    <citation type="journal article" date="2009" name="BMC Genomics">
        <title>Evidence for niche adaptation in the genome of the bovine pathogen Streptococcus uberis.</title>
        <authorList>
            <person name="Ward P.N."/>
            <person name="Holden M.T.G."/>
            <person name="Leigh J.A."/>
            <person name="Lennard N."/>
            <person name="Bignell A."/>
            <person name="Barron A."/>
            <person name="Clark L."/>
            <person name="Quail M.A."/>
            <person name="Woodward J."/>
            <person name="Barrell B.G."/>
            <person name="Egan S.A."/>
            <person name="Field T.R."/>
            <person name="Maskell D."/>
            <person name="Kehoe M."/>
            <person name="Dowson C.G."/>
            <person name="Chanter N."/>
            <person name="Whatmore A.M."/>
            <person name="Bentley S.D."/>
            <person name="Parkhill J."/>
        </authorList>
    </citation>
    <scope>NUCLEOTIDE SEQUENCE [LARGE SCALE GENOMIC DNA]</scope>
    <source>
        <strain>ATCC BAA-854 / 0140J</strain>
    </source>
</reference>